<accession>P34607</accession>
<dbReference type="EC" id="3.1.-.-"/>
<dbReference type="EMBL" id="Z22176">
    <property type="protein sequence ID" value="CAA80137.1"/>
    <property type="molecule type" value="Genomic_DNA"/>
</dbReference>
<dbReference type="PIR" id="S40930">
    <property type="entry name" value="S40930"/>
</dbReference>
<dbReference type="RefSeq" id="NP_499105.1">
    <property type="nucleotide sequence ID" value="NM_066704.10"/>
</dbReference>
<dbReference type="PDB" id="8Q66">
    <property type="method" value="X-ray"/>
    <property type="resolution" value="2.03 A"/>
    <property type="chains" value="A=633-899"/>
</dbReference>
<dbReference type="PDBsum" id="8Q66"/>
<dbReference type="SMR" id="P34607"/>
<dbReference type="BioGRID" id="41542">
    <property type="interactions" value="8"/>
</dbReference>
<dbReference type="FunCoup" id="P34607">
    <property type="interactions" value="1554"/>
</dbReference>
<dbReference type="IntAct" id="P34607">
    <property type="interactions" value="1"/>
</dbReference>
<dbReference type="STRING" id="6239.ZK1098.8.1"/>
<dbReference type="PaxDb" id="6239-ZK1098.8"/>
<dbReference type="PeptideAtlas" id="P34607"/>
<dbReference type="EnsemblMetazoa" id="ZK1098.8.1">
    <property type="protein sequence ID" value="ZK1098.8.1"/>
    <property type="gene ID" value="WBGene00003504"/>
</dbReference>
<dbReference type="GeneID" id="176347"/>
<dbReference type="KEGG" id="cel:CELE_ZK1098.8"/>
<dbReference type="UCSC" id="ZK1098.8">
    <property type="organism name" value="c. elegans"/>
</dbReference>
<dbReference type="AGR" id="WB:WBGene00003504"/>
<dbReference type="CTD" id="176347"/>
<dbReference type="WormBase" id="ZK1098.8">
    <property type="protein sequence ID" value="CE00370"/>
    <property type="gene ID" value="WBGene00003504"/>
    <property type="gene designation" value="mut-7"/>
</dbReference>
<dbReference type="eggNOG" id="KOG2207">
    <property type="taxonomic scope" value="Eukaryota"/>
</dbReference>
<dbReference type="GeneTree" id="ENSGT00390000006843"/>
<dbReference type="HOGENOM" id="CLU_354213_0_0_1"/>
<dbReference type="InParanoid" id="P34607"/>
<dbReference type="OMA" id="EQCSNWQ"/>
<dbReference type="OrthoDB" id="18193at2759"/>
<dbReference type="PhylomeDB" id="P34607"/>
<dbReference type="PRO" id="PR:P34607"/>
<dbReference type="Proteomes" id="UP000001940">
    <property type="component" value="Chromosome III"/>
</dbReference>
<dbReference type="Bgee" id="WBGene00003504">
    <property type="expression patterns" value="Expressed in germ line (C elegans) and 4 other cell types or tissues"/>
</dbReference>
<dbReference type="GO" id="GO:0005737">
    <property type="term" value="C:cytoplasm"/>
    <property type="evidence" value="ECO:0000318"/>
    <property type="project" value="GO_Central"/>
</dbReference>
<dbReference type="GO" id="GO:0005829">
    <property type="term" value="C:cytosol"/>
    <property type="evidence" value="ECO:0000314"/>
    <property type="project" value="WormBase"/>
</dbReference>
<dbReference type="GO" id="GO:1990633">
    <property type="term" value="C:mutator focus"/>
    <property type="evidence" value="ECO:0000314"/>
    <property type="project" value="WormBase"/>
</dbReference>
<dbReference type="GO" id="GO:0005634">
    <property type="term" value="C:nucleus"/>
    <property type="evidence" value="ECO:0000314"/>
    <property type="project" value="WormBase"/>
</dbReference>
<dbReference type="GO" id="GO:0008408">
    <property type="term" value="F:3'-5' exonuclease activity"/>
    <property type="evidence" value="ECO:0000318"/>
    <property type="project" value="GO_Central"/>
</dbReference>
<dbReference type="GO" id="GO:0044748">
    <property type="term" value="F:3'-5'-exoribonuclease activity involved in mature miRNA 3'-end processing"/>
    <property type="evidence" value="ECO:0000250"/>
    <property type="project" value="WormBase"/>
</dbReference>
<dbReference type="GO" id="GO:0046872">
    <property type="term" value="F:metal ion binding"/>
    <property type="evidence" value="ECO:0007669"/>
    <property type="project" value="UniProtKB-KW"/>
</dbReference>
<dbReference type="GO" id="GO:0003676">
    <property type="term" value="F:nucleic acid binding"/>
    <property type="evidence" value="ECO:0007669"/>
    <property type="project" value="InterPro"/>
</dbReference>
<dbReference type="GO" id="GO:0008306">
    <property type="term" value="P:associative learning"/>
    <property type="evidence" value="ECO:0000315"/>
    <property type="project" value="WormBase"/>
</dbReference>
<dbReference type="GO" id="GO:0008355">
    <property type="term" value="P:olfactory learning"/>
    <property type="evidence" value="ECO:0000315"/>
    <property type="project" value="WormBase"/>
</dbReference>
<dbReference type="GO" id="GO:0016441">
    <property type="term" value="P:post-transcriptional gene silencing"/>
    <property type="evidence" value="ECO:0000315"/>
    <property type="project" value="WormBase"/>
</dbReference>
<dbReference type="GO" id="GO:0044747">
    <property type="term" value="P:pre-miRNA 3'-end processing"/>
    <property type="evidence" value="ECO:0000250"/>
    <property type="project" value="WormBase"/>
</dbReference>
<dbReference type="GO" id="GO:0035194">
    <property type="term" value="P:regulatory ncRNA-mediated post-transcriptional gene silencing"/>
    <property type="evidence" value="ECO:0000315"/>
    <property type="project" value="WormBase"/>
</dbReference>
<dbReference type="CDD" id="cd06146">
    <property type="entry name" value="mut-7_like_exo"/>
    <property type="match status" value="1"/>
</dbReference>
<dbReference type="CDD" id="cd18772">
    <property type="entry name" value="PIN_Mut7-C-like"/>
    <property type="match status" value="1"/>
</dbReference>
<dbReference type="FunFam" id="3.30.420.10:FF:000244">
    <property type="entry name" value="Exonuclease mut-7"/>
    <property type="match status" value="1"/>
</dbReference>
<dbReference type="Gene3D" id="3.30.420.10">
    <property type="entry name" value="Ribonuclease H-like superfamily/Ribonuclease H"/>
    <property type="match status" value="1"/>
</dbReference>
<dbReference type="InterPro" id="IPR002562">
    <property type="entry name" value="3'-5'_exonuclease_dom"/>
</dbReference>
<dbReference type="InterPro" id="IPR052408">
    <property type="entry name" value="Exonuclease_MUT-7-like"/>
</dbReference>
<dbReference type="InterPro" id="IPR037432">
    <property type="entry name" value="Mut-7_DEDDy_dom"/>
</dbReference>
<dbReference type="InterPro" id="IPR002782">
    <property type="entry name" value="Mut7-C_RNAse_dom"/>
</dbReference>
<dbReference type="InterPro" id="IPR012337">
    <property type="entry name" value="RNaseH-like_sf"/>
</dbReference>
<dbReference type="InterPro" id="IPR036397">
    <property type="entry name" value="RNaseH_sf"/>
</dbReference>
<dbReference type="PANTHER" id="PTHR47765">
    <property type="entry name" value="3'-5' EXONUCLEASE DOMAIN-CONTAINING PROTEIN"/>
    <property type="match status" value="1"/>
</dbReference>
<dbReference type="PANTHER" id="PTHR47765:SF2">
    <property type="entry name" value="EXONUCLEASE MUT-7 HOMOLOG"/>
    <property type="match status" value="1"/>
</dbReference>
<dbReference type="Pfam" id="PF01612">
    <property type="entry name" value="DNA_pol_A_exo1"/>
    <property type="match status" value="1"/>
</dbReference>
<dbReference type="Pfam" id="PF01927">
    <property type="entry name" value="Mut7-C"/>
    <property type="match status" value="1"/>
</dbReference>
<dbReference type="SMART" id="SM00474">
    <property type="entry name" value="35EXOc"/>
    <property type="match status" value="1"/>
</dbReference>
<dbReference type="SUPFAM" id="SSF53098">
    <property type="entry name" value="Ribonuclease H-like"/>
    <property type="match status" value="1"/>
</dbReference>
<name>MUT7_CAEEL</name>
<gene>
    <name type="primary">mut-7</name>
    <name type="ORF">ZK1098.8</name>
</gene>
<evidence type="ECO:0000250" key="1"/>
<evidence type="ECO:0000269" key="2">
    <source>
    </source>
</evidence>
<evidence type="ECO:0000305" key="3"/>
<evidence type="ECO:0007829" key="4">
    <source>
        <dbReference type="PDB" id="8Q66"/>
    </source>
</evidence>
<reference key="1">
    <citation type="journal article" date="1994" name="Nature">
        <title>2.2 Mb of contiguous nucleotide sequence from chromosome III of C. elegans.</title>
        <authorList>
            <person name="Wilson R."/>
            <person name="Ainscough R."/>
            <person name="Anderson K."/>
            <person name="Baynes C."/>
            <person name="Berks M."/>
            <person name="Bonfield J."/>
            <person name="Burton J."/>
            <person name="Connell M."/>
            <person name="Copsey T."/>
            <person name="Cooper J."/>
            <person name="Coulson A."/>
            <person name="Craxton M."/>
            <person name="Dear S."/>
            <person name="Du Z."/>
            <person name="Durbin R."/>
            <person name="Favello A."/>
            <person name="Fraser A."/>
            <person name="Fulton L."/>
            <person name="Gardner A."/>
            <person name="Green P."/>
            <person name="Hawkins T."/>
            <person name="Hillier L."/>
            <person name="Jier M."/>
            <person name="Johnston L."/>
            <person name="Jones M."/>
            <person name="Kershaw J."/>
            <person name="Kirsten J."/>
            <person name="Laisster N."/>
            <person name="Latreille P."/>
            <person name="Lightning J."/>
            <person name="Lloyd C."/>
            <person name="Mortimore B."/>
            <person name="O'Callaghan M."/>
            <person name="Parsons J."/>
            <person name="Percy C."/>
            <person name="Rifken L."/>
            <person name="Roopra A."/>
            <person name="Saunders D."/>
            <person name="Shownkeen R."/>
            <person name="Sims M."/>
            <person name="Smaldon N."/>
            <person name="Smith A."/>
            <person name="Smith M."/>
            <person name="Sonnhammer E."/>
            <person name="Staden R."/>
            <person name="Sulston J."/>
            <person name="Thierry-Mieg J."/>
            <person name="Thomas K."/>
            <person name="Vaudin M."/>
            <person name="Vaughan K."/>
            <person name="Waterston R."/>
            <person name="Watson A."/>
            <person name="Weinstock L."/>
            <person name="Wilkinson-Sproat J."/>
            <person name="Wohldman P."/>
        </authorList>
    </citation>
    <scope>NUCLEOTIDE SEQUENCE [LARGE SCALE GENOMIC DNA]</scope>
    <source>
        <strain>Bristol N2</strain>
    </source>
</reference>
<reference key="2">
    <citation type="journal article" date="1998" name="Science">
        <title>Genome sequence of the nematode C. elegans: a platform for investigating biology.</title>
        <authorList>
            <consortium name="The C. elegans sequencing consortium"/>
        </authorList>
    </citation>
    <scope>NUCLEOTIDE SEQUENCE [LARGE SCALE GENOMIC DNA]</scope>
    <source>
        <strain>Bristol N2</strain>
    </source>
</reference>
<reference key="3">
    <citation type="journal article" date="1999" name="Cell">
        <title>Mut-7 of C. elegans, required for transposon silencing and RNA interference, is a homolog of Werner syndrome helicase and RNaseD.</title>
        <authorList>
            <person name="Ketting R.F."/>
            <person name="Haverkamp T.H."/>
            <person name="van Luenen H.G."/>
            <person name="Plasterk R.H."/>
        </authorList>
    </citation>
    <scope>FUNCTION</scope>
</reference>
<keyword id="KW-0002">3D-structure</keyword>
<keyword id="KW-0269">Exonuclease</keyword>
<keyword id="KW-0378">Hydrolase</keyword>
<keyword id="KW-0460">Magnesium</keyword>
<keyword id="KW-0479">Metal-binding</keyword>
<keyword id="KW-0540">Nuclease</keyword>
<keyword id="KW-1185">Reference proteome</keyword>
<keyword id="KW-0943">RNA-mediated gene silencing</keyword>
<comment type="function">
    <text evidence="2">Represses the transposition of Tc1, Tc3, Tc4, and Tc5, perhaps by degrading transposon-specific messages. Also affects sperm development, sensitivity to RNAi of mainly germline expressed genes, silencing of some germline transgenes, X chromosome loss, and is required for cosuppression (functional silencing of chromosomal loci induced by transgenes) and for silencing induced by antisense RNA oligomers.</text>
</comment>
<comment type="cofactor">
    <cofactor evidence="1">
        <name>Mg(2+)</name>
        <dbReference type="ChEBI" id="CHEBI:18420"/>
    </cofactor>
</comment>
<comment type="interaction">
    <interactant intactId="EBI-476365">
        <id>P34607</id>
    </interactant>
    <interactant intactId="EBI-476355">
        <id>Q19672</id>
        <label>rde-2</label>
    </interactant>
    <organismsDiffer>false</organismsDiffer>
    <experiments>8</experiments>
</comment>
<comment type="similarity">
    <text evidence="3">Belongs to the mut-7 family.</text>
</comment>
<sequence>MEEEPYKRKLTKAEKKAKYRTDYAEPLKSRREVLKAIMNGPESERERKVRAKNREFFNEDYRSGVNIYGMAVDMMKAMPDRGKTSGQSLAVWYLEDFGVWLKESGQETELRQKYLTGTIQINALDVCTIGQKQLLSEIFDITKEKFTEDITQLLDAAIKKQDFSVAADMAIQYNLLRDHHFEHLVLPLMLSGKDQTAYKLISNNERMQQQLVEFFDRMVGISVVAVEEMLKPYKETKIMTIPMEKLTGKTLDKLISTIINKNTHEYNFSRELSKFAKNHSQNGNLKALKFNISERYEKGKSDDNYFQHMVETFTKAEDVREPILFYLWSSNDTEKQIDAICFAIYLGIASSSSYQLPNVMRDFFRQPDSKLREAKELLVRRKTLQVPLNGEQLFVFENERRTQIHMVKTESEMNYLCSEIKSLSDEPAPVYVGFDSEWKPSNLTAVHDSKIAIIQLFFKNCVWLVDCVELEKANMADDWWQKFASRLFGDSPVKVVGFDMRNDLDAMATIPALKSSMKIEDTKNAFDLKRLAENVCDIDMEILELPKKTFKLADLTHYLLGLELDKTEQCSNWQCRPLRKKQIVYAALDAVVVVETFKKILSIVEEKNKDADIEKIVRESNVMAPKKDKGHKSYRKLKTIPWLELYDILRSHRNPTRSPQRPHDIKVIVDTMLIGFGKNLRRVGIDVILPKDVSDFRKYLKEIERVGGEHLRHIITVPSKSYEALKMDYDNYTIAIPELNNMSPVDQLIEFFDLFNVDIRPEDVYPRCTECNSRLQIKFPGPVLHFLHQYCVIHVQNVYRADMSEFPLEEWWNRMLHINPDDYDGVKVEMSRPSPTSKWIVATVPTGCLHITRQTALHTNLPDGIEVRIHKVPDDEFKRRNLSFYVCGECGTVACDGRGNQASESTSQEC</sequence>
<feature type="chain" id="PRO_0000096650" description="Exonuclease mut-7">
    <location>
        <begin position="1"/>
        <end position="910"/>
    </location>
</feature>
<feature type="domain" description="3'-5' exonuclease">
    <location>
        <begin position="404"/>
        <end position="605"/>
    </location>
</feature>
<feature type="helix" evidence="4">
    <location>
        <begin position="637"/>
        <end position="639"/>
    </location>
</feature>
<feature type="helix" evidence="4">
    <location>
        <begin position="642"/>
        <end position="649"/>
    </location>
</feature>
<feature type="helix" evidence="4">
    <location>
        <begin position="662"/>
        <end position="664"/>
    </location>
</feature>
<feature type="strand" evidence="4">
    <location>
        <begin position="666"/>
        <end position="669"/>
    </location>
</feature>
<feature type="helix" evidence="4">
    <location>
        <begin position="674"/>
        <end position="682"/>
    </location>
</feature>
<feature type="strand" evidence="4">
    <location>
        <begin position="686"/>
        <end position="688"/>
    </location>
</feature>
<feature type="helix" evidence="4">
    <location>
        <begin position="693"/>
        <end position="706"/>
    </location>
</feature>
<feature type="helix" evidence="4">
    <location>
        <begin position="708"/>
        <end position="710"/>
    </location>
</feature>
<feature type="strand" evidence="4">
    <location>
        <begin position="713"/>
        <end position="716"/>
    </location>
</feature>
<feature type="helix" evidence="4">
    <location>
        <begin position="720"/>
        <end position="729"/>
    </location>
</feature>
<feature type="turn" evidence="4">
    <location>
        <begin position="730"/>
        <end position="732"/>
    </location>
</feature>
<feature type="strand" evidence="4">
    <location>
        <begin position="733"/>
        <end position="735"/>
    </location>
</feature>
<feature type="turn" evidence="4">
    <location>
        <begin position="737"/>
        <end position="740"/>
    </location>
</feature>
<feature type="helix" evidence="4">
    <location>
        <begin position="744"/>
        <end position="754"/>
    </location>
</feature>
<feature type="turn" evidence="4">
    <location>
        <begin position="769"/>
        <end position="771"/>
    </location>
</feature>
<feature type="strand" evidence="4">
    <location>
        <begin position="776"/>
        <end position="780"/>
    </location>
</feature>
<feature type="helix" evidence="4">
    <location>
        <begin position="781"/>
        <end position="791"/>
    </location>
</feature>
<feature type="helix" evidence="4">
    <location>
        <begin position="793"/>
        <end position="797"/>
    </location>
</feature>
<feature type="strand" evidence="4">
    <location>
        <begin position="801"/>
        <end position="803"/>
    </location>
</feature>
<feature type="helix" evidence="4">
    <location>
        <begin position="808"/>
        <end position="816"/>
    </location>
</feature>
<feature type="helix" evidence="4">
    <location>
        <begin position="820"/>
        <end position="822"/>
    </location>
</feature>
<feature type="turn" evidence="4">
    <location>
        <begin position="823"/>
        <end position="825"/>
    </location>
</feature>
<feature type="strand" evidence="4">
    <location>
        <begin position="829"/>
        <end position="831"/>
    </location>
</feature>
<feature type="strand" evidence="4">
    <location>
        <begin position="841"/>
        <end position="844"/>
    </location>
</feature>
<feature type="strand" evidence="4">
    <location>
        <begin position="847"/>
        <end position="850"/>
    </location>
</feature>
<feature type="helix" evidence="4">
    <location>
        <begin position="851"/>
        <end position="853"/>
    </location>
</feature>
<feature type="strand" evidence="4">
    <location>
        <begin position="855"/>
        <end position="858"/>
    </location>
</feature>
<feature type="helix" evidence="4">
    <location>
        <begin position="869"/>
        <end position="871"/>
    </location>
</feature>
<feature type="helix" evidence="4">
    <location>
        <begin position="874"/>
        <end position="878"/>
    </location>
</feature>
<feature type="strand" evidence="4">
    <location>
        <begin position="883"/>
        <end position="887"/>
    </location>
</feature>
<feature type="turn" evidence="4">
    <location>
        <begin position="888"/>
        <end position="890"/>
    </location>
</feature>
<feature type="strand" evidence="4">
    <location>
        <begin position="893"/>
        <end position="895"/>
    </location>
</feature>
<organism>
    <name type="scientific">Caenorhabditis elegans</name>
    <dbReference type="NCBI Taxonomy" id="6239"/>
    <lineage>
        <taxon>Eukaryota</taxon>
        <taxon>Metazoa</taxon>
        <taxon>Ecdysozoa</taxon>
        <taxon>Nematoda</taxon>
        <taxon>Chromadorea</taxon>
        <taxon>Rhabditida</taxon>
        <taxon>Rhabditina</taxon>
        <taxon>Rhabditomorpha</taxon>
        <taxon>Rhabditoidea</taxon>
        <taxon>Rhabditidae</taxon>
        <taxon>Peloderinae</taxon>
        <taxon>Caenorhabditis</taxon>
    </lineage>
</organism>
<protein>
    <recommendedName>
        <fullName>Exonuclease mut-7</fullName>
        <ecNumber>3.1.-.-</ecNumber>
    </recommendedName>
    <alternativeName>
        <fullName>Exonuclease 3'-5' domain-containing protein 3 homolog</fullName>
    </alternativeName>
</protein>
<proteinExistence type="evidence at protein level"/>